<accession>A1WXZ0</accession>
<sequence>MSNKGIQSIRGFSDILPEESPLWQYAESAIRRVLESYGYREIRLPVLERTELFSRSIGEVTDIVEKEMYTFDDRNGDSVTLRPEGTAGCVRAGIQSGLLHNAEPRLWYAGPMFRHERPQKGRLRQFHQVGAEVFGIPEPELDAEMIIMTARMLRELGLSDVRLQLNSLGTPESRAAHREQLVAYLRRHEDRLDEDARRRLETNPLRIFDSKNPQVQQVMADAPRLMDCLDSVSAEHFTVVRNLLERAGVEYEVNPSLVRGLDYYTRTVFEWVTDRLGAQGTVCAGGRFDGLVEQLGGRPTPAIGFALGLERLVALLEDQGTPGQGGAPHAYLVVATEAGAGLEMAEALRDALPALRVQMHAGGGGFKAQLKRADRSGARVALILGDDEQAAGALTIKDLRGEDGQQRLPLDDAVTYLRGLIGA</sequence>
<evidence type="ECO:0000255" key="1">
    <source>
        <dbReference type="HAMAP-Rule" id="MF_00127"/>
    </source>
</evidence>
<feature type="chain" id="PRO_1000076275" description="Histidine--tRNA ligase">
    <location>
        <begin position="1"/>
        <end position="423"/>
    </location>
</feature>
<reference key="1">
    <citation type="submission" date="2006-12" db="EMBL/GenBank/DDBJ databases">
        <title>Complete sequence of Halorhodospira halophila SL1.</title>
        <authorList>
            <consortium name="US DOE Joint Genome Institute"/>
            <person name="Copeland A."/>
            <person name="Lucas S."/>
            <person name="Lapidus A."/>
            <person name="Barry K."/>
            <person name="Detter J.C."/>
            <person name="Glavina del Rio T."/>
            <person name="Hammon N."/>
            <person name="Israni S."/>
            <person name="Dalin E."/>
            <person name="Tice H."/>
            <person name="Pitluck S."/>
            <person name="Saunders E."/>
            <person name="Brettin T."/>
            <person name="Bruce D."/>
            <person name="Han C."/>
            <person name="Tapia R."/>
            <person name="Schmutz J."/>
            <person name="Larimer F."/>
            <person name="Land M."/>
            <person name="Hauser L."/>
            <person name="Kyrpides N."/>
            <person name="Mikhailova N."/>
            <person name="Hoff W."/>
            <person name="Richardson P."/>
        </authorList>
    </citation>
    <scope>NUCLEOTIDE SEQUENCE [LARGE SCALE GENOMIC DNA]</scope>
    <source>
        <strain>DSM 244 / SL1</strain>
    </source>
</reference>
<organism>
    <name type="scientific">Halorhodospira halophila (strain DSM 244 / SL1)</name>
    <name type="common">Ectothiorhodospira halophila (strain DSM 244 / SL1)</name>
    <dbReference type="NCBI Taxonomy" id="349124"/>
    <lineage>
        <taxon>Bacteria</taxon>
        <taxon>Pseudomonadati</taxon>
        <taxon>Pseudomonadota</taxon>
        <taxon>Gammaproteobacteria</taxon>
        <taxon>Chromatiales</taxon>
        <taxon>Ectothiorhodospiraceae</taxon>
        <taxon>Halorhodospira</taxon>
    </lineage>
</organism>
<comment type="catalytic activity">
    <reaction evidence="1">
        <text>tRNA(His) + L-histidine + ATP = L-histidyl-tRNA(His) + AMP + diphosphate + H(+)</text>
        <dbReference type="Rhea" id="RHEA:17313"/>
        <dbReference type="Rhea" id="RHEA-COMP:9665"/>
        <dbReference type="Rhea" id="RHEA-COMP:9689"/>
        <dbReference type="ChEBI" id="CHEBI:15378"/>
        <dbReference type="ChEBI" id="CHEBI:30616"/>
        <dbReference type="ChEBI" id="CHEBI:33019"/>
        <dbReference type="ChEBI" id="CHEBI:57595"/>
        <dbReference type="ChEBI" id="CHEBI:78442"/>
        <dbReference type="ChEBI" id="CHEBI:78527"/>
        <dbReference type="ChEBI" id="CHEBI:456215"/>
        <dbReference type="EC" id="6.1.1.21"/>
    </reaction>
</comment>
<comment type="subunit">
    <text evidence="1">Homodimer.</text>
</comment>
<comment type="subcellular location">
    <subcellularLocation>
        <location evidence="1">Cytoplasm</location>
    </subcellularLocation>
</comment>
<comment type="similarity">
    <text evidence="1">Belongs to the class-II aminoacyl-tRNA synthetase family.</text>
</comment>
<protein>
    <recommendedName>
        <fullName evidence="1">Histidine--tRNA ligase</fullName>
        <ecNumber evidence="1">6.1.1.21</ecNumber>
    </recommendedName>
    <alternativeName>
        <fullName evidence="1">Histidyl-tRNA synthetase</fullName>
        <shortName evidence="1">HisRS</shortName>
    </alternativeName>
</protein>
<dbReference type="EC" id="6.1.1.21" evidence="1"/>
<dbReference type="EMBL" id="CP000544">
    <property type="protein sequence ID" value="ABM62552.1"/>
    <property type="molecule type" value="Genomic_DNA"/>
</dbReference>
<dbReference type="RefSeq" id="WP_011814574.1">
    <property type="nucleotide sequence ID" value="NC_008789.1"/>
</dbReference>
<dbReference type="SMR" id="A1WXZ0"/>
<dbReference type="STRING" id="349124.Hhal_1788"/>
<dbReference type="KEGG" id="hha:Hhal_1788"/>
<dbReference type="eggNOG" id="COG0124">
    <property type="taxonomic scope" value="Bacteria"/>
</dbReference>
<dbReference type="HOGENOM" id="CLU_025113_1_1_6"/>
<dbReference type="OrthoDB" id="9800814at2"/>
<dbReference type="Proteomes" id="UP000000647">
    <property type="component" value="Chromosome"/>
</dbReference>
<dbReference type="GO" id="GO:0005737">
    <property type="term" value="C:cytoplasm"/>
    <property type="evidence" value="ECO:0007669"/>
    <property type="project" value="UniProtKB-SubCell"/>
</dbReference>
<dbReference type="GO" id="GO:0005524">
    <property type="term" value="F:ATP binding"/>
    <property type="evidence" value="ECO:0007669"/>
    <property type="project" value="UniProtKB-UniRule"/>
</dbReference>
<dbReference type="GO" id="GO:0004821">
    <property type="term" value="F:histidine-tRNA ligase activity"/>
    <property type="evidence" value="ECO:0007669"/>
    <property type="project" value="UniProtKB-UniRule"/>
</dbReference>
<dbReference type="GO" id="GO:0006427">
    <property type="term" value="P:histidyl-tRNA aminoacylation"/>
    <property type="evidence" value="ECO:0007669"/>
    <property type="project" value="UniProtKB-UniRule"/>
</dbReference>
<dbReference type="CDD" id="cd00773">
    <property type="entry name" value="HisRS-like_core"/>
    <property type="match status" value="1"/>
</dbReference>
<dbReference type="CDD" id="cd00859">
    <property type="entry name" value="HisRS_anticodon"/>
    <property type="match status" value="1"/>
</dbReference>
<dbReference type="FunFam" id="3.30.930.10:FF:000005">
    <property type="entry name" value="Histidine--tRNA ligase"/>
    <property type="match status" value="1"/>
</dbReference>
<dbReference type="Gene3D" id="3.40.50.800">
    <property type="entry name" value="Anticodon-binding domain"/>
    <property type="match status" value="1"/>
</dbReference>
<dbReference type="Gene3D" id="3.30.930.10">
    <property type="entry name" value="Bira Bifunctional Protein, Domain 2"/>
    <property type="match status" value="1"/>
</dbReference>
<dbReference type="HAMAP" id="MF_00127">
    <property type="entry name" value="His_tRNA_synth"/>
    <property type="match status" value="1"/>
</dbReference>
<dbReference type="InterPro" id="IPR006195">
    <property type="entry name" value="aa-tRNA-synth_II"/>
</dbReference>
<dbReference type="InterPro" id="IPR045864">
    <property type="entry name" value="aa-tRNA-synth_II/BPL/LPL"/>
</dbReference>
<dbReference type="InterPro" id="IPR004154">
    <property type="entry name" value="Anticodon-bd"/>
</dbReference>
<dbReference type="InterPro" id="IPR036621">
    <property type="entry name" value="Anticodon-bd_dom_sf"/>
</dbReference>
<dbReference type="InterPro" id="IPR015807">
    <property type="entry name" value="His-tRNA-ligase"/>
</dbReference>
<dbReference type="InterPro" id="IPR041715">
    <property type="entry name" value="HisRS-like_core"/>
</dbReference>
<dbReference type="InterPro" id="IPR004516">
    <property type="entry name" value="HisRS/HisZ"/>
</dbReference>
<dbReference type="InterPro" id="IPR033656">
    <property type="entry name" value="HisRS_anticodon"/>
</dbReference>
<dbReference type="NCBIfam" id="TIGR00442">
    <property type="entry name" value="hisS"/>
    <property type="match status" value="1"/>
</dbReference>
<dbReference type="PANTHER" id="PTHR43707:SF1">
    <property type="entry name" value="HISTIDINE--TRNA LIGASE, MITOCHONDRIAL-RELATED"/>
    <property type="match status" value="1"/>
</dbReference>
<dbReference type="PANTHER" id="PTHR43707">
    <property type="entry name" value="HISTIDYL-TRNA SYNTHETASE"/>
    <property type="match status" value="1"/>
</dbReference>
<dbReference type="Pfam" id="PF03129">
    <property type="entry name" value="HGTP_anticodon"/>
    <property type="match status" value="1"/>
</dbReference>
<dbReference type="Pfam" id="PF13393">
    <property type="entry name" value="tRNA-synt_His"/>
    <property type="match status" value="1"/>
</dbReference>
<dbReference type="PIRSF" id="PIRSF001549">
    <property type="entry name" value="His-tRNA_synth"/>
    <property type="match status" value="1"/>
</dbReference>
<dbReference type="SUPFAM" id="SSF52954">
    <property type="entry name" value="Class II aaRS ABD-related"/>
    <property type="match status" value="1"/>
</dbReference>
<dbReference type="SUPFAM" id="SSF55681">
    <property type="entry name" value="Class II aaRS and biotin synthetases"/>
    <property type="match status" value="1"/>
</dbReference>
<dbReference type="PROSITE" id="PS50862">
    <property type="entry name" value="AA_TRNA_LIGASE_II"/>
    <property type="match status" value="1"/>
</dbReference>
<keyword id="KW-0030">Aminoacyl-tRNA synthetase</keyword>
<keyword id="KW-0067">ATP-binding</keyword>
<keyword id="KW-0963">Cytoplasm</keyword>
<keyword id="KW-0436">Ligase</keyword>
<keyword id="KW-0547">Nucleotide-binding</keyword>
<keyword id="KW-0648">Protein biosynthesis</keyword>
<keyword id="KW-1185">Reference proteome</keyword>
<gene>
    <name evidence="1" type="primary">hisS</name>
    <name type="ordered locus">Hhal_1788</name>
</gene>
<name>SYH_HALHL</name>
<proteinExistence type="inferred from homology"/>